<organism>
    <name type="scientific">Drosophila willistoni</name>
    <name type="common">Fruit fly</name>
    <dbReference type="NCBI Taxonomy" id="7260"/>
    <lineage>
        <taxon>Eukaryota</taxon>
        <taxon>Metazoa</taxon>
        <taxon>Ecdysozoa</taxon>
        <taxon>Arthropoda</taxon>
        <taxon>Hexapoda</taxon>
        <taxon>Insecta</taxon>
        <taxon>Pterygota</taxon>
        <taxon>Neoptera</taxon>
        <taxon>Endopterygota</taxon>
        <taxon>Diptera</taxon>
        <taxon>Brachycera</taxon>
        <taxon>Muscomorpha</taxon>
        <taxon>Ephydroidea</taxon>
        <taxon>Drosophilidae</taxon>
        <taxon>Drosophila</taxon>
        <taxon>Sophophora</taxon>
    </lineage>
</organism>
<keyword id="KW-0378">Hydrolase</keyword>
<keyword id="KW-0460">Magnesium</keyword>
<keyword id="KW-0464">Manganese</keyword>
<keyword id="KW-0479">Metal-binding</keyword>
<keyword id="KW-0904">Protein phosphatase</keyword>
<keyword id="KW-1185">Reference proteome</keyword>
<comment type="catalytic activity">
    <reaction>
        <text>O-phospho-L-seryl-[protein] + H2O = L-seryl-[protein] + phosphate</text>
        <dbReference type="Rhea" id="RHEA:20629"/>
        <dbReference type="Rhea" id="RHEA-COMP:9863"/>
        <dbReference type="Rhea" id="RHEA-COMP:11604"/>
        <dbReference type="ChEBI" id="CHEBI:15377"/>
        <dbReference type="ChEBI" id="CHEBI:29999"/>
        <dbReference type="ChEBI" id="CHEBI:43474"/>
        <dbReference type="ChEBI" id="CHEBI:83421"/>
        <dbReference type="EC" id="3.1.3.16"/>
    </reaction>
</comment>
<comment type="catalytic activity">
    <reaction>
        <text>O-phospho-L-threonyl-[protein] + H2O = L-threonyl-[protein] + phosphate</text>
        <dbReference type="Rhea" id="RHEA:47004"/>
        <dbReference type="Rhea" id="RHEA-COMP:11060"/>
        <dbReference type="Rhea" id="RHEA-COMP:11605"/>
        <dbReference type="ChEBI" id="CHEBI:15377"/>
        <dbReference type="ChEBI" id="CHEBI:30013"/>
        <dbReference type="ChEBI" id="CHEBI:43474"/>
        <dbReference type="ChEBI" id="CHEBI:61977"/>
        <dbReference type="EC" id="3.1.3.16"/>
    </reaction>
</comment>
<comment type="cofactor">
    <cofactor evidence="1 5">
        <name>Mg(2+)</name>
        <dbReference type="ChEBI" id="CHEBI:18420"/>
    </cofactor>
    <cofactor evidence="1 5">
        <name>Mn(2+)</name>
        <dbReference type="ChEBI" id="CHEBI:29035"/>
    </cofactor>
</comment>
<comment type="similarity">
    <text evidence="3">Belongs to the PP2C family.</text>
</comment>
<sequence>MLSSLAGKLQGKTKFLIDVLKFYDARMLKSSSMSGIGKRGDPYLVKVVQGRSRKHSIASAKDNHRYGEDSWFISSTPKAEVMGVADGVGGWSELGIDSGLFASELMFWCANYAKRESFDGRTPLDLLIESYSEIKGKTDPIVGSSTACLVSLNRRDCTMHSANLGDSGFLVIRNGRMLHRSEEQVHDFNAPYQLTVVPNERFDNVYCDRPELADSTRLPLQEGDLVLLATDGLFDNVPESLIVKTLGKYQGVTREEDLQSAANSLVHMAKDLSISPNFESPFALKAKAFEVDYPGGGKPDDITVILATVAVPQND</sequence>
<gene>
    <name evidence="2" type="primary">fig</name>
    <name type="ORF">GK19179</name>
</gene>
<accession>B4NBL6</accession>
<feature type="chain" id="PRO_0000377405" description="Protein phosphatase PTC7 homolog fig">
    <location>
        <begin position="1"/>
        <end position="315"/>
    </location>
</feature>
<feature type="domain" description="PPM-type phosphatase" evidence="4">
    <location>
        <begin position="54"/>
        <end position="309"/>
    </location>
</feature>
<feature type="binding site" evidence="1">
    <location>
        <position position="86"/>
    </location>
    <ligand>
        <name>Mn(2+)</name>
        <dbReference type="ChEBI" id="CHEBI:29035"/>
        <label>1</label>
    </ligand>
</feature>
<feature type="binding site" evidence="1">
    <location>
        <position position="86"/>
    </location>
    <ligand>
        <name>Mn(2+)</name>
        <dbReference type="ChEBI" id="CHEBI:29035"/>
        <label>2</label>
    </ligand>
</feature>
<feature type="binding site" evidence="1">
    <location>
        <position position="87"/>
    </location>
    <ligand>
        <name>Mn(2+)</name>
        <dbReference type="ChEBI" id="CHEBI:29035"/>
        <label>1</label>
    </ligand>
</feature>
<feature type="binding site" evidence="1">
    <location>
        <position position="231"/>
    </location>
    <ligand>
        <name>Mn(2+)</name>
        <dbReference type="ChEBI" id="CHEBI:29035"/>
        <label>2</label>
    </ligand>
</feature>
<dbReference type="EC" id="3.1.3.16"/>
<dbReference type="EMBL" id="CH964232">
    <property type="protein sequence ID" value="EDW81180.1"/>
    <property type="molecule type" value="Genomic_DNA"/>
</dbReference>
<dbReference type="RefSeq" id="XP_002070194.2">
    <property type="nucleotide sequence ID" value="XM_002070158.2"/>
</dbReference>
<dbReference type="SMR" id="B4NBL6"/>
<dbReference type="STRING" id="7260.B4NBL6"/>
<dbReference type="EnsemblMetazoa" id="FBtr0249830">
    <property type="protein sequence ID" value="FBpp0248322"/>
    <property type="gene ID" value="FBgn0221177"/>
</dbReference>
<dbReference type="EnsemblMetazoa" id="XM_002070158.4">
    <property type="protein sequence ID" value="XP_002070194.3"/>
    <property type="gene ID" value="LOC6647958"/>
</dbReference>
<dbReference type="GeneID" id="6647958"/>
<dbReference type="KEGG" id="dwi:6647958"/>
<dbReference type="CTD" id="43511"/>
<dbReference type="eggNOG" id="KOG1379">
    <property type="taxonomic scope" value="Eukaryota"/>
</dbReference>
<dbReference type="HOGENOM" id="CLU_029404_3_0_1"/>
<dbReference type="OMA" id="DSWFVSS"/>
<dbReference type="OrthoDB" id="60843at2759"/>
<dbReference type="PhylomeDB" id="B4NBL6"/>
<dbReference type="Proteomes" id="UP000007798">
    <property type="component" value="Unassembled WGS sequence"/>
</dbReference>
<dbReference type="GO" id="GO:0005739">
    <property type="term" value="C:mitochondrion"/>
    <property type="evidence" value="ECO:0007669"/>
    <property type="project" value="TreeGrafter"/>
</dbReference>
<dbReference type="GO" id="GO:0046872">
    <property type="term" value="F:metal ion binding"/>
    <property type="evidence" value="ECO:0007669"/>
    <property type="project" value="UniProtKB-KW"/>
</dbReference>
<dbReference type="GO" id="GO:0004722">
    <property type="term" value="F:protein serine/threonine phosphatase activity"/>
    <property type="evidence" value="ECO:0000250"/>
    <property type="project" value="UniProtKB"/>
</dbReference>
<dbReference type="GO" id="GO:0016311">
    <property type="term" value="P:dephosphorylation"/>
    <property type="evidence" value="ECO:0000250"/>
    <property type="project" value="UniProtKB"/>
</dbReference>
<dbReference type="CDD" id="cd00143">
    <property type="entry name" value="PP2Cc"/>
    <property type="match status" value="1"/>
</dbReference>
<dbReference type="FunFam" id="3.60.40.10:FF:000009">
    <property type="entry name" value="Blast:Protein phosphatase PTC7 homolog"/>
    <property type="match status" value="1"/>
</dbReference>
<dbReference type="Gene3D" id="3.60.40.10">
    <property type="entry name" value="PPM-type phosphatase domain"/>
    <property type="match status" value="1"/>
</dbReference>
<dbReference type="InterPro" id="IPR036457">
    <property type="entry name" value="PPM-type-like_dom_sf"/>
</dbReference>
<dbReference type="InterPro" id="IPR001932">
    <property type="entry name" value="PPM-type_phosphatase-like_dom"/>
</dbReference>
<dbReference type="InterPro" id="IPR039123">
    <property type="entry name" value="PPTC7"/>
</dbReference>
<dbReference type="PANTHER" id="PTHR12320">
    <property type="entry name" value="PROTEIN PHOSPHATASE 2C"/>
    <property type="match status" value="1"/>
</dbReference>
<dbReference type="PANTHER" id="PTHR12320:SF1">
    <property type="entry name" value="PROTEIN PHOSPHATASE PTC7 HOMOLOG"/>
    <property type="match status" value="1"/>
</dbReference>
<dbReference type="Pfam" id="PF13672">
    <property type="entry name" value="PP2C_2"/>
    <property type="match status" value="1"/>
</dbReference>
<dbReference type="SMART" id="SM00331">
    <property type="entry name" value="PP2C_SIG"/>
    <property type="match status" value="1"/>
</dbReference>
<dbReference type="SMART" id="SM00332">
    <property type="entry name" value="PP2Cc"/>
    <property type="match status" value="1"/>
</dbReference>
<dbReference type="SUPFAM" id="SSF81606">
    <property type="entry name" value="PP2C-like"/>
    <property type="match status" value="1"/>
</dbReference>
<dbReference type="PROSITE" id="PS51746">
    <property type="entry name" value="PPM_2"/>
    <property type="match status" value="1"/>
</dbReference>
<reference evidence="6" key="1">
    <citation type="journal article" date="2007" name="Nature">
        <title>Evolution of genes and genomes on the Drosophila phylogeny.</title>
        <authorList>
            <consortium name="Drosophila 12 genomes consortium"/>
        </authorList>
    </citation>
    <scope>NUCLEOTIDE SEQUENCE [LARGE SCALE GENOMIC DNA]</scope>
    <source>
        <strain evidence="6">Tucson 14030-0811.24</strain>
    </source>
</reference>
<name>PTC71_DROWI</name>
<proteinExistence type="inferred from homology"/>
<protein>
    <recommendedName>
        <fullName>Protein phosphatase PTC7 homolog fig</fullName>
    </recommendedName>
    <alternativeName>
        <fullName>Fos intronic gene protein</fullName>
        <ecNumber>3.1.3.16</ecNumber>
    </alternativeName>
</protein>
<evidence type="ECO:0000250" key="1">
    <source>
        <dbReference type="UniProtKB" id="P35813"/>
    </source>
</evidence>
<evidence type="ECO:0000250" key="2">
    <source>
        <dbReference type="UniProtKB" id="Q9VAH4"/>
    </source>
</evidence>
<evidence type="ECO:0000255" key="3"/>
<evidence type="ECO:0000255" key="4">
    <source>
        <dbReference type="PROSITE-ProRule" id="PRU01082"/>
    </source>
</evidence>
<evidence type="ECO:0000305" key="5"/>
<evidence type="ECO:0000312" key="6">
    <source>
        <dbReference type="EMBL" id="EDW81180.1"/>
    </source>
</evidence>